<accession>Q06J68</accession>
<name>ATPA_BIGNA</name>
<reference key="1">
    <citation type="journal article" date="2007" name="Mol. Biol. Evol.">
        <title>The complete chloroplast genome of the chlorarachniophyte Bigelowiella natans: evidence for independent origins of chlorarachniophyte and euglenid secondary endosymbionts.</title>
        <authorList>
            <person name="Rogers M.B."/>
            <person name="Gilson P.R."/>
            <person name="Su V."/>
            <person name="McFadden G.I."/>
            <person name="Keeling P.J."/>
        </authorList>
    </citation>
    <scope>NUCLEOTIDE SEQUENCE [LARGE SCALE GENOMIC DNA]</scope>
</reference>
<geneLocation type="chloroplast"/>
<protein>
    <recommendedName>
        <fullName evidence="1">ATP synthase subunit alpha, chloroplastic</fullName>
        <ecNumber evidence="1">7.1.2.2</ecNumber>
    </recommendedName>
    <alternativeName>
        <fullName evidence="1">ATP synthase F1 sector subunit alpha</fullName>
    </alternativeName>
    <alternativeName>
        <fullName evidence="1">F-ATPase subunit alpha</fullName>
    </alternativeName>
</protein>
<gene>
    <name evidence="1" type="primary">atpA</name>
</gene>
<evidence type="ECO:0000255" key="1">
    <source>
        <dbReference type="HAMAP-Rule" id="MF_01346"/>
    </source>
</evidence>
<keyword id="KW-0066">ATP synthesis</keyword>
<keyword id="KW-0067">ATP-binding</keyword>
<keyword id="KW-0139">CF(1)</keyword>
<keyword id="KW-0150">Chloroplast</keyword>
<keyword id="KW-0375">Hydrogen ion transport</keyword>
<keyword id="KW-0406">Ion transport</keyword>
<keyword id="KW-0472">Membrane</keyword>
<keyword id="KW-0547">Nucleotide-binding</keyword>
<keyword id="KW-0934">Plastid</keyword>
<keyword id="KW-0793">Thylakoid</keyword>
<keyword id="KW-1278">Translocase</keyword>
<keyword id="KW-0813">Transport</keyword>
<feature type="chain" id="PRO_0000296336" description="ATP synthase subunit alpha, chloroplastic">
    <location>
        <begin position="1"/>
        <end position="497"/>
    </location>
</feature>
<feature type="binding site" evidence="1">
    <location>
        <begin position="170"/>
        <end position="177"/>
    </location>
    <ligand>
        <name>ATP</name>
        <dbReference type="ChEBI" id="CHEBI:30616"/>
    </ligand>
</feature>
<feature type="site" description="Required for activity" evidence="1">
    <location>
        <position position="363"/>
    </location>
</feature>
<organism>
    <name type="scientific">Bigelowiella natans</name>
    <name type="common">Pedinomonas minutissima</name>
    <name type="synonym">Chlorarachnion sp. (strain CCMP621)</name>
    <dbReference type="NCBI Taxonomy" id="227086"/>
    <lineage>
        <taxon>Eukaryota</taxon>
        <taxon>Sar</taxon>
        <taxon>Rhizaria</taxon>
        <taxon>Cercozoa</taxon>
        <taxon>Chlorarachniophyceae</taxon>
        <taxon>Bigelowiella</taxon>
    </lineage>
</organism>
<proteinExistence type="inferred from homology"/>
<dbReference type="EC" id="7.1.2.2" evidence="1"/>
<dbReference type="EMBL" id="DQ851108">
    <property type="protein sequence ID" value="ABG91391.1"/>
    <property type="molecule type" value="Genomic_DNA"/>
</dbReference>
<dbReference type="RefSeq" id="YP_778559.1">
    <property type="nucleotide sequence ID" value="NC_008408.1"/>
</dbReference>
<dbReference type="SMR" id="Q06J68"/>
<dbReference type="GeneID" id="4352976"/>
<dbReference type="GO" id="GO:0009535">
    <property type="term" value="C:chloroplast thylakoid membrane"/>
    <property type="evidence" value="ECO:0007669"/>
    <property type="project" value="UniProtKB-SubCell"/>
</dbReference>
<dbReference type="GO" id="GO:0045259">
    <property type="term" value="C:proton-transporting ATP synthase complex"/>
    <property type="evidence" value="ECO:0007669"/>
    <property type="project" value="UniProtKB-KW"/>
</dbReference>
<dbReference type="GO" id="GO:0043531">
    <property type="term" value="F:ADP binding"/>
    <property type="evidence" value="ECO:0007669"/>
    <property type="project" value="TreeGrafter"/>
</dbReference>
<dbReference type="GO" id="GO:0005524">
    <property type="term" value="F:ATP binding"/>
    <property type="evidence" value="ECO:0007669"/>
    <property type="project" value="UniProtKB-UniRule"/>
</dbReference>
<dbReference type="GO" id="GO:0046933">
    <property type="term" value="F:proton-transporting ATP synthase activity, rotational mechanism"/>
    <property type="evidence" value="ECO:0007669"/>
    <property type="project" value="UniProtKB-UniRule"/>
</dbReference>
<dbReference type="CDD" id="cd18113">
    <property type="entry name" value="ATP-synt_F1_alpha_C"/>
    <property type="match status" value="1"/>
</dbReference>
<dbReference type="CDD" id="cd18116">
    <property type="entry name" value="ATP-synt_F1_alpha_N"/>
    <property type="match status" value="1"/>
</dbReference>
<dbReference type="CDD" id="cd01132">
    <property type="entry name" value="F1-ATPase_alpha_CD"/>
    <property type="match status" value="1"/>
</dbReference>
<dbReference type="FunFam" id="1.20.150.20:FF:000001">
    <property type="entry name" value="ATP synthase subunit alpha"/>
    <property type="match status" value="1"/>
</dbReference>
<dbReference type="FunFam" id="2.40.30.20:FF:000001">
    <property type="entry name" value="ATP synthase subunit alpha"/>
    <property type="match status" value="1"/>
</dbReference>
<dbReference type="FunFam" id="3.40.50.300:FF:000002">
    <property type="entry name" value="ATP synthase subunit alpha"/>
    <property type="match status" value="1"/>
</dbReference>
<dbReference type="Gene3D" id="2.40.30.20">
    <property type="match status" value="1"/>
</dbReference>
<dbReference type="Gene3D" id="1.20.150.20">
    <property type="entry name" value="ATP synthase alpha/beta chain, C-terminal domain"/>
    <property type="match status" value="1"/>
</dbReference>
<dbReference type="Gene3D" id="3.40.50.300">
    <property type="entry name" value="P-loop containing nucleotide triphosphate hydrolases"/>
    <property type="match status" value="1"/>
</dbReference>
<dbReference type="HAMAP" id="MF_01346">
    <property type="entry name" value="ATP_synth_alpha_bact"/>
    <property type="match status" value="1"/>
</dbReference>
<dbReference type="InterPro" id="IPR023366">
    <property type="entry name" value="ATP_synth_asu-like_sf"/>
</dbReference>
<dbReference type="InterPro" id="IPR000793">
    <property type="entry name" value="ATP_synth_asu_C"/>
</dbReference>
<dbReference type="InterPro" id="IPR038376">
    <property type="entry name" value="ATP_synth_asu_C_sf"/>
</dbReference>
<dbReference type="InterPro" id="IPR033732">
    <property type="entry name" value="ATP_synth_F1_a_nt-bd_dom"/>
</dbReference>
<dbReference type="InterPro" id="IPR005294">
    <property type="entry name" value="ATP_synth_F1_asu"/>
</dbReference>
<dbReference type="InterPro" id="IPR020003">
    <property type="entry name" value="ATPase_a/bsu_AS"/>
</dbReference>
<dbReference type="InterPro" id="IPR004100">
    <property type="entry name" value="ATPase_F1/V1/A1_a/bsu_N"/>
</dbReference>
<dbReference type="InterPro" id="IPR036121">
    <property type="entry name" value="ATPase_F1/V1/A1_a/bsu_N_sf"/>
</dbReference>
<dbReference type="InterPro" id="IPR000194">
    <property type="entry name" value="ATPase_F1/V1/A1_a/bsu_nucl-bd"/>
</dbReference>
<dbReference type="InterPro" id="IPR027417">
    <property type="entry name" value="P-loop_NTPase"/>
</dbReference>
<dbReference type="NCBIfam" id="TIGR00962">
    <property type="entry name" value="atpA"/>
    <property type="match status" value="1"/>
</dbReference>
<dbReference type="NCBIfam" id="NF009884">
    <property type="entry name" value="PRK13343.1"/>
    <property type="match status" value="1"/>
</dbReference>
<dbReference type="PANTHER" id="PTHR48082">
    <property type="entry name" value="ATP SYNTHASE SUBUNIT ALPHA, MITOCHONDRIAL"/>
    <property type="match status" value="1"/>
</dbReference>
<dbReference type="PANTHER" id="PTHR48082:SF2">
    <property type="entry name" value="ATP SYNTHASE SUBUNIT ALPHA, MITOCHONDRIAL"/>
    <property type="match status" value="1"/>
</dbReference>
<dbReference type="Pfam" id="PF00006">
    <property type="entry name" value="ATP-synt_ab"/>
    <property type="match status" value="1"/>
</dbReference>
<dbReference type="Pfam" id="PF00306">
    <property type="entry name" value="ATP-synt_ab_C"/>
    <property type="match status" value="1"/>
</dbReference>
<dbReference type="Pfam" id="PF02874">
    <property type="entry name" value="ATP-synt_ab_N"/>
    <property type="match status" value="1"/>
</dbReference>
<dbReference type="PIRSF" id="PIRSF039088">
    <property type="entry name" value="F_ATPase_subunit_alpha"/>
    <property type="match status" value="1"/>
</dbReference>
<dbReference type="SUPFAM" id="SSF47917">
    <property type="entry name" value="C-terminal domain of alpha and beta subunits of F1 ATP synthase"/>
    <property type="match status" value="1"/>
</dbReference>
<dbReference type="SUPFAM" id="SSF50615">
    <property type="entry name" value="N-terminal domain of alpha and beta subunits of F1 ATP synthase"/>
    <property type="match status" value="1"/>
</dbReference>
<dbReference type="SUPFAM" id="SSF52540">
    <property type="entry name" value="P-loop containing nucleoside triphosphate hydrolases"/>
    <property type="match status" value="1"/>
</dbReference>
<dbReference type="PROSITE" id="PS00152">
    <property type="entry name" value="ATPASE_ALPHA_BETA"/>
    <property type="match status" value="1"/>
</dbReference>
<sequence length="497" mass="53712">MLNIATDEICSLIRYRIQNYNSELKLNNVGVVFKVGDGIVRVFGLQGAMAGELLLFEEGSVGIAFNLEKNNIGVVLLGDCTLIQEGMIVKGTGKIGEVPVGDKFLGRIVDSLANPIDGKGDIVSSQTRLIEPPAPGIVDRRSVYEPLQTGITAIDAMIPIGRGQRELIIGDRQTGKTAVAIDTILNQKGKDVKCVYVAVGQKSSSIAQVVTTLQDKGALDYTILVSAAADTTATMQYIAPYSGTALAEYFMYNGSHALVVYDDLSKQAQAYREMSLLLRRPPGREAYPGDVFYLHSRLLERAAKLSDSLGGGSLTALPIVETQEGDVSAYIPTNVISITDGQIFLSSDIFNAGFRPAINVGISVSRVGSAAQPKAMKRVAGKLKLELAQFAELEAFSQFASDLDQATQNQLARGKRLREILKQPQYSPLSLENQVGIIFAGTNGYLDKVSIENIPSYITSLTESLKNEKSKFGDVILSTKDFTKDEENVLRNILEAS</sequence>
<comment type="function">
    <text evidence="1">Produces ATP from ADP in the presence of a proton gradient across the membrane. The alpha chain is a regulatory subunit.</text>
</comment>
<comment type="catalytic activity">
    <reaction evidence="1">
        <text>ATP + H2O + 4 H(+)(in) = ADP + phosphate + 5 H(+)(out)</text>
        <dbReference type="Rhea" id="RHEA:57720"/>
        <dbReference type="ChEBI" id="CHEBI:15377"/>
        <dbReference type="ChEBI" id="CHEBI:15378"/>
        <dbReference type="ChEBI" id="CHEBI:30616"/>
        <dbReference type="ChEBI" id="CHEBI:43474"/>
        <dbReference type="ChEBI" id="CHEBI:456216"/>
        <dbReference type="EC" id="7.1.2.2"/>
    </reaction>
</comment>
<comment type="subunit">
    <text evidence="1">F-type ATPases have 2 components, CF(1) - the catalytic core - and CF(0) - the membrane proton channel. CF(1) has five subunits: alpha(3), beta(3), gamma(1), delta(1), epsilon(1). CF(0) has four main subunits: a, b, b' and c.</text>
</comment>
<comment type="subcellular location">
    <subcellularLocation>
        <location evidence="1">Plastid</location>
        <location evidence="1">Chloroplast thylakoid membrane</location>
        <topology evidence="1">Peripheral membrane protein</topology>
    </subcellularLocation>
</comment>
<comment type="similarity">
    <text evidence="1">Belongs to the ATPase alpha/beta chains family.</text>
</comment>